<organism>
    <name type="scientific">Methanosarcina mazei (strain ATCC BAA-159 / DSM 3647 / Goe1 / Go1 / JCM 11833 / OCM 88)</name>
    <name type="common">Methanosarcina frisia</name>
    <dbReference type="NCBI Taxonomy" id="192952"/>
    <lineage>
        <taxon>Archaea</taxon>
        <taxon>Methanobacteriati</taxon>
        <taxon>Methanobacteriota</taxon>
        <taxon>Stenosarchaea group</taxon>
        <taxon>Methanomicrobia</taxon>
        <taxon>Methanosarcinales</taxon>
        <taxon>Methanosarcinaceae</taxon>
        <taxon>Methanosarcina</taxon>
    </lineage>
</organism>
<sequence>MSESSIKIENVVASTKLAEEFDLTVIESQFEGAEYNKQKFPGLVYRVSDPKAAFLVFTSGKVVCTGAKNVADVHTVIGNMAKKLNSIGIKTMENPQITVQNIVASADLHTILNLNAIAIGLGLENIEYEPEQFPGLVYRIDEPKVVVLIFSSGKLVVTGGKTPEDCESGVEVVRQQLDNMGLL</sequence>
<keyword id="KW-0238">DNA-binding</keyword>
<keyword id="KW-0677">Repeat</keyword>
<keyword id="KW-0804">Transcription</keyword>
<keyword id="KW-0805">Transcription regulation</keyword>
<accession>Q8PY36</accession>
<feature type="chain" id="PRO_0000154011" description="TATA-box-binding protein 2">
    <location>
        <begin position="1"/>
        <end position="183"/>
    </location>
</feature>
<feature type="repeat" description="1">
    <location>
        <begin position="8"/>
        <end position="84"/>
    </location>
</feature>
<feature type="repeat" description="2">
    <location>
        <begin position="99"/>
        <end position="177"/>
    </location>
</feature>
<dbReference type="EMBL" id="AE008384">
    <property type="protein sequence ID" value="AAM30724.1"/>
    <property type="molecule type" value="Genomic_DNA"/>
</dbReference>
<dbReference type="RefSeq" id="WP_011032977.1">
    <property type="nucleotide sequence ID" value="NC_003901.1"/>
</dbReference>
<dbReference type="SMR" id="Q8PY36"/>
<dbReference type="IntAct" id="Q8PY36">
    <property type="interactions" value="1"/>
</dbReference>
<dbReference type="MINT" id="Q8PY36"/>
<dbReference type="KEGG" id="mma:MM_1028"/>
<dbReference type="PATRIC" id="fig|192952.21.peg.1204"/>
<dbReference type="eggNOG" id="arCOG01764">
    <property type="taxonomic scope" value="Archaea"/>
</dbReference>
<dbReference type="HOGENOM" id="CLU_060161_4_3_2"/>
<dbReference type="Proteomes" id="UP000000595">
    <property type="component" value="Chromosome"/>
</dbReference>
<dbReference type="GO" id="GO:0003677">
    <property type="term" value="F:DNA binding"/>
    <property type="evidence" value="ECO:0007669"/>
    <property type="project" value="UniProtKB-KW"/>
</dbReference>
<dbReference type="GO" id="GO:0003700">
    <property type="term" value="F:DNA-binding transcription factor activity"/>
    <property type="evidence" value="ECO:0007669"/>
    <property type="project" value="UniProtKB-UniRule"/>
</dbReference>
<dbReference type="GO" id="GO:0006352">
    <property type="term" value="P:DNA-templated transcription initiation"/>
    <property type="evidence" value="ECO:0007669"/>
    <property type="project" value="InterPro"/>
</dbReference>
<dbReference type="CDD" id="cd04518">
    <property type="entry name" value="TBP_archaea"/>
    <property type="match status" value="1"/>
</dbReference>
<dbReference type="FunFam" id="3.30.310.10:FF:000007">
    <property type="entry name" value="TATA-box-binding protein"/>
    <property type="match status" value="1"/>
</dbReference>
<dbReference type="FunFam" id="3.30.310.10:FF:000010">
    <property type="entry name" value="TATA-box-binding protein"/>
    <property type="match status" value="1"/>
</dbReference>
<dbReference type="Gene3D" id="3.30.310.10">
    <property type="entry name" value="TATA-Binding Protein"/>
    <property type="match status" value="2"/>
</dbReference>
<dbReference type="HAMAP" id="MF_00408">
    <property type="entry name" value="TATA_bind_prot_arch"/>
    <property type="match status" value="1"/>
</dbReference>
<dbReference type="InterPro" id="IPR000814">
    <property type="entry name" value="TBP"/>
</dbReference>
<dbReference type="InterPro" id="IPR033711">
    <property type="entry name" value="TBP_archaea"/>
</dbReference>
<dbReference type="InterPro" id="IPR030491">
    <property type="entry name" value="TBP_CS"/>
</dbReference>
<dbReference type="InterPro" id="IPR012295">
    <property type="entry name" value="TBP_dom_sf"/>
</dbReference>
<dbReference type="NCBIfam" id="NF001593">
    <property type="entry name" value="PRK00394.1-2"/>
    <property type="match status" value="1"/>
</dbReference>
<dbReference type="NCBIfam" id="NF001596">
    <property type="entry name" value="PRK00394.2-1"/>
    <property type="match status" value="1"/>
</dbReference>
<dbReference type="NCBIfam" id="NF001597">
    <property type="entry name" value="PRK00394.2-2"/>
    <property type="match status" value="1"/>
</dbReference>
<dbReference type="NCBIfam" id="NF001599">
    <property type="entry name" value="PRK00394.2-4"/>
    <property type="match status" value="1"/>
</dbReference>
<dbReference type="PANTHER" id="PTHR10126">
    <property type="entry name" value="TATA-BOX BINDING PROTEIN"/>
    <property type="match status" value="1"/>
</dbReference>
<dbReference type="Pfam" id="PF00352">
    <property type="entry name" value="TBP"/>
    <property type="match status" value="2"/>
</dbReference>
<dbReference type="PRINTS" id="PR00686">
    <property type="entry name" value="TIFACTORIID"/>
</dbReference>
<dbReference type="SUPFAM" id="SSF55945">
    <property type="entry name" value="TATA-box binding protein-like"/>
    <property type="match status" value="2"/>
</dbReference>
<dbReference type="PROSITE" id="PS00351">
    <property type="entry name" value="TFIID"/>
    <property type="match status" value="1"/>
</dbReference>
<comment type="function">
    <text evidence="1">General factor that plays a role in the activation of archaeal genes transcribed by RNA polymerase. Binds specifically to the TATA box promoter element which lies close to the position of transcription initiation.</text>
</comment>
<comment type="similarity">
    <text evidence="1">Belongs to the TBP family.</text>
</comment>
<gene>
    <name evidence="1" type="primary">tbp2</name>
    <name type="ordered locus">MM_1028</name>
</gene>
<reference key="1">
    <citation type="journal article" date="2002" name="J. Mol. Microbiol. Biotechnol.">
        <title>The genome of Methanosarcina mazei: evidence for lateral gene transfer between Bacteria and Archaea.</title>
        <authorList>
            <person name="Deppenmeier U."/>
            <person name="Johann A."/>
            <person name="Hartsch T."/>
            <person name="Merkl R."/>
            <person name="Schmitz R.A."/>
            <person name="Martinez-Arias R."/>
            <person name="Henne A."/>
            <person name="Wiezer A."/>
            <person name="Baeumer S."/>
            <person name="Jacobi C."/>
            <person name="Brueggemann H."/>
            <person name="Lienard T."/>
            <person name="Christmann A."/>
            <person name="Boemecke M."/>
            <person name="Steckel S."/>
            <person name="Bhattacharyya A."/>
            <person name="Lykidis A."/>
            <person name="Overbeek R."/>
            <person name="Klenk H.-P."/>
            <person name="Gunsalus R.P."/>
            <person name="Fritz H.-J."/>
            <person name="Gottschalk G."/>
        </authorList>
    </citation>
    <scope>NUCLEOTIDE SEQUENCE [LARGE SCALE GENOMIC DNA]</scope>
    <source>
        <strain>ATCC BAA-159 / DSM 3647 / Goe1 / Go1 / JCM 11833 / OCM 88</strain>
    </source>
</reference>
<name>TBP2_METMA</name>
<evidence type="ECO:0000255" key="1">
    <source>
        <dbReference type="HAMAP-Rule" id="MF_00408"/>
    </source>
</evidence>
<protein>
    <recommendedName>
        <fullName evidence="1">TATA-box-binding protein 2</fullName>
    </recommendedName>
    <alternativeName>
        <fullName evidence="1">Box A-binding protein 2</fullName>
        <shortName evidence="1">BAP 2</shortName>
    </alternativeName>
    <alternativeName>
        <fullName evidence="1">TATA sequence-binding protein 2</fullName>
        <shortName evidence="1">TBP 2</shortName>
    </alternativeName>
    <alternativeName>
        <fullName evidence="1">TATA-box factor 2</fullName>
    </alternativeName>
</protein>
<proteinExistence type="inferred from homology"/>